<reference key="1">
    <citation type="journal article" date="2002" name="J. Bacteriol.">
        <title>Whole-genome comparison of Mycobacterium tuberculosis clinical and laboratory strains.</title>
        <authorList>
            <person name="Fleischmann R.D."/>
            <person name="Alland D."/>
            <person name="Eisen J.A."/>
            <person name="Carpenter L."/>
            <person name="White O."/>
            <person name="Peterson J.D."/>
            <person name="DeBoy R.T."/>
            <person name="Dodson R.J."/>
            <person name="Gwinn M.L."/>
            <person name="Haft D.H."/>
            <person name="Hickey E.K."/>
            <person name="Kolonay J.F."/>
            <person name="Nelson W.C."/>
            <person name="Umayam L.A."/>
            <person name="Ermolaeva M.D."/>
            <person name="Salzberg S.L."/>
            <person name="Delcher A."/>
            <person name="Utterback T.R."/>
            <person name="Weidman J.F."/>
            <person name="Khouri H.M."/>
            <person name="Gill J."/>
            <person name="Mikula A."/>
            <person name="Bishai W."/>
            <person name="Jacobs W.R. Jr."/>
            <person name="Venter J.C."/>
            <person name="Fraser C.M."/>
        </authorList>
    </citation>
    <scope>NUCLEOTIDE SEQUENCE [LARGE SCALE GENOMIC DNA]</scope>
    <source>
        <strain>CDC 1551 / Oshkosh</strain>
    </source>
</reference>
<sequence>MTTPGEDHAGSFYLPRLEYSTLPMAVDRGVGWKTLRDAGPVVFMNGWYYLTRREDVLAALRNPKVFSSRKALQPPGNPLPVVPLAFDPPEHTRYRRILQPYFSPAALSKALPSLRRHTVAMIDAIAGRGECEAMADLANLFPFQLFLVLYGLPLEDRDRLIGWKDAVIAMSDRPHPTEADVAAARELLEYLTAMVAERRRNPGPDVLSQVQIGEDPLSEIEVLGLSHLLILAGLDTVTAAVGFSLLELARRPQLRAMLRDNPKQIRVFIEEIVRLEPSAPVAPRVTTEPVTVGGMTLPAGSPVRLCMAAVNRDGSDAMSTDELVMDGKVHRHWGFGGGPHRCLGSHLARLELTLLVGEWLNQIPDFELAPDYAPEIRFPSKSFALKNLPLRWS</sequence>
<accession>P9WPL2</accession>
<accession>L0T7P2</accession>
<accession>O53936</accession>
<accession>P63723</accession>
<organism>
    <name type="scientific">Mycobacterium tuberculosis (strain CDC 1551 / Oshkosh)</name>
    <dbReference type="NCBI Taxonomy" id="83331"/>
    <lineage>
        <taxon>Bacteria</taxon>
        <taxon>Bacillati</taxon>
        <taxon>Actinomycetota</taxon>
        <taxon>Actinomycetes</taxon>
        <taxon>Mycobacteriales</taxon>
        <taxon>Mycobacteriaceae</taxon>
        <taxon>Mycobacterium</taxon>
        <taxon>Mycobacterium tuberculosis complex</taxon>
    </lineage>
</organism>
<feature type="chain" id="PRO_0000426932" description="Putative cytochrome P450 143">
    <location>
        <begin position="1"/>
        <end position="393"/>
    </location>
</feature>
<feature type="binding site" description="axial binding residue" evidence="1">
    <location>
        <position position="342"/>
    </location>
    <ligand>
        <name>heme</name>
        <dbReference type="ChEBI" id="CHEBI:30413"/>
    </ligand>
    <ligandPart>
        <name>Fe</name>
        <dbReference type="ChEBI" id="CHEBI:18248"/>
    </ligandPart>
</feature>
<keyword id="KW-0349">Heme</keyword>
<keyword id="KW-0408">Iron</keyword>
<keyword id="KW-0479">Metal-binding</keyword>
<keyword id="KW-0503">Monooxygenase</keyword>
<keyword id="KW-0560">Oxidoreductase</keyword>
<keyword id="KW-1185">Reference proteome</keyword>
<gene>
    <name type="primary">cyp143</name>
    <name type="ordered locus">MT1834</name>
</gene>
<evidence type="ECO:0000250" key="1"/>
<evidence type="ECO:0000305" key="2"/>
<dbReference type="EC" id="1.14.-.-"/>
<dbReference type="EMBL" id="AE000516">
    <property type="protein sequence ID" value="AAK46104.1"/>
    <property type="status" value="ALT_INIT"/>
    <property type="molecule type" value="Genomic_DNA"/>
</dbReference>
<dbReference type="PIR" id="C70929">
    <property type="entry name" value="C70929"/>
</dbReference>
<dbReference type="RefSeq" id="WP_003408802.1">
    <property type="nucleotide sequence ID" value="NZ_KK341227.1"/>
</dbReference>
<dbReference type="SMR" id="P9WPL2"/>
<dbReference type="KEGG" id="mtc:MT1834"/>
<dbReference type="PATRIC" id="fig|83331.31.peg.1975"/>
<dbReference type="HOGENOM" id="CLU_033716_0_1_11"/>
<dbReference type="Proteomes" id="UP000001020">
    <property type="component" value="Chromosome"/>
</dbReference>
<dbReference type="GO" id="GO:0020037">
    <property type="term" value="F:heme binding"/>
    <property type="evidence" value="ECO:0007669"/>
    <property type="project" value="InterPro"/>
</dbReference>
<dbReference type="GO" id="GO:0005506">
    <property type="term" value="F:iron ion binding"/>
    <property type="evidence" value="ECO:0007669"/>
    <property type="project" value="InterPro"/>
</dbReference>
<dbReference type="GO" id="GO:0004497">
    <property type="term" value="F:monooxygenase activity"/>
    <property type="evidence" value="ECO:0007669"/>
    <property type="project" value="UniProtKB-KW"/>
</dbReference>
<dbReference type="GO" id="GO:0016705">
    <property type="term" value="F:oxidoreductase activity, acting on paired donors, with incorporation or reduction of molecular oxygen"/>
    <property type="evidence" value="ECO:0007669"/>
    <property type="project" value="InterPro"/>
</dbReference>
<dbReference type="CDD" id="cd11035">
    <property type="entry name" value="P450cam-like"/>
    <property type="match status" value="1"/>
</dbReference>
<dbReference type="Gene3D" id="1.10.630.10">
    <property type="entry name" value="Cytochrome P450"/>
    <property type="match status" value="1"/>
</dbReference>
<dbReference type="InterPro" id="IPR001128">
    <property type="entry name" value="Cyt_P450"/>
</dbReference>
<dbReference type="InterPro" id="IPR002397">
    <property type="entry name" value="Cyt_P450_B"/>
</dbReference>
<dbReference type="InterPro" id="IPR017972">
    <property type="entry name" value="Cyt_P450_CS"/>
</dbReference>
<dbReference type="InterPro" id="IPR036396">
    <property type="entry name" value="Cyt_P450_sf"/>
</dbReference>
<dbReference type="PANTHER" id="PTHR46696">
    <property type="entry name" value="P450, PUTATIVE (EUROFUNG)-RELATED"/>
    <property type="match status" value="1"/>
</dbReference>
<dbReference type="PANTHER" id="PTHR46696:SF6">
    <property type="entry name" value="P450, PUTATIVE (EUROFUNG)-RELATED"/>
    <property type="match status" value="1"/>
</dbReference>
<dbReference type="Pfam" id="PF00067">
    <property type="entry name" value="p450"/>
    <property type="match status" value="2"/>
</dbReference>
<dbReference type="PRINTS" id="PR00359">
    <property type="entry name" value="BP450"/>
</dbReference>
<dbReference type="PRINTS" id="PR00385">
    <property type="entry name" value="P450"/>
</dbReference>
<dbReference type="SUPFAM" id="SSF48264">
    <property type="entry name" value="Cytochrome P450"/>
    <property type="match status" value="1"/>
</dbReference>
<dbReference type="PROSITE" id="PS00086">
    <property type="entry name" value="CYTOCHROME_P450"/>
    <property type="match status" value="1"/>
</dbReference>
<proteinExistence type="inferred from homology"/>
<name>CP143_MYCTO</name>
<protein>
    <recommendedName>
        <fullName>Putative cytochrome P450 143</fullName>
        <ecNumber>1.14.-.-</ecNumber>
    </recommendedName>
</protein>
<comment type="cofactor">
    <cofactor evidence="1">
        <name>heme</name>
        <dbReference type="ChEBI" id="CHEBI:30413"/>
    </cofactor>
</comment>
<comment type="similarity">
    <text evidence="2">Belongs to the cytochrome P450 family.</text>
</comment>
<comment type="sequence caution" evidence="2">
    <conflict type="erroneous initiation">
        <sequence resource="EMBL-CDS" id="AAK46104"/>
    </conflict>
</comment>